<accession>Q03646</accession>
<evidence type="ECO:0000250" key="1">
    <source>
        <dbReference type="UniProtKB" id="P19260"/>
    </source>
</evidence>
<evidence type="ECO:0000250" key="2">
    <source>
        <dbReference type="UniProtKB" id="P19599"/>
    </source>
</evidence>
<evidence type="ECO:0000250" key="3">
    <source>
        <dbReference type="UniProtKB" id="P50498"/>
    </source>
</evidence>
<evidence type="ECO:0000255" key="4"/>
<evidence type="ECO:0000256" key="5">
    <source>
        <dbReference type="SAM" id="MobiDB-lite"/>
    </source>
</evidence>
<evidence type="ECO:0000269" key="6">
    <source>
    </source>
</evidence>
<evidence type="ECO:0000303" key="7">
    <source>
    </source>
</evidence>
<dbReference type="EMBL" id="M59765">
    <property type="protein sequence ID" value="AAA29691.1"/>
    <property type="molecule type" value="Genomic_DNA"/>
</dbReference>
<dbReference type="PIR" id="B39112">
    <property type="entry name" value="B39112"/>
</dbReference>
<dbReference type="GlyCosmos" id="Q03646">
    <property type="glycosylation" value="6 sites, No reported glycans"/>
</dbReference>
<dbReference type="GO" id="GO:0005886">
    <property type="term" value="C:plasma membrane"/>
    <property type="evidence" value="ECO:0007669"/>
    <property type="project" value="UniProtKB-SubCell"/>
</dbReference>
<dbReference type="GO" id="GO:0098552">
    <property type="term" value="C:side of membrane"/>
    <property type="evidence" value="ECO:0007669"/>
    <property type="project" value="UniProtKB-KW"/>
</dbReference>
<dbReference type="GO" id="GO:0007155">
    <property type="term" value="P:cell adhesion"/>
    <property type="evidence" value="ECO:0007669"/>
    <property type="project" value="InterPro"/>
</dbReference>
<dbReference type="InterPro" id="IPR053329">
    <property type="entry name" value="Merozoite_Surface_Assoc"/>
</dbReference>
<dbReference type="InterPro" id="IPR001136">
    <property type="entry name" value="MSA2"/>
</dbReference>
<dbReference type="PANTHER" id="PTHR39110">
    <property type="entry name" value="TRANSMEMBRANE PROTEIN"/>
    <property type="match status" value="1"/>
</dbReference>
<dbReference type="PANTHER" id="PTHR39110:SF1">
    <property type="entry name" value="TRANSMEMBRANE PROTEIN"/>
    <property type="match status" value="1"/>
</dbReference>
<dbReference type="Pfam" id="PF00985">
    <property type="entry name" value="MSA_2"/>
    <property type="match status" value="1"/>
</dbReference>
<keyword id="KW-1003">Cell membrane</keyword>
<keyword id="KW-1015">Disulfide bond</keyword>
<keyword id="KW-0325">Glycoprotein</keyword>
<keyword id="KW-0336">GPI-anchor</keyword>
<keyword id="KW-0449">Lipoprotein</keyword>
<keyword id="KW-0461">Malaria</keyword>
<keyword id="KW-0472">Membrane</keyword>
<keyword id="KW-0477">Merozoite</keyword>
<keyword id="KW-0677">Repeat</keyword>
<keyword id="KW-0732">Signal</keyword>
<comment type="function">
    <text evidence="3">May play a role in the merozoite attachment to the erythrocyte.</text>
</comment>
<comment type="subcellular location">
    <subcellularLocation>
        <location evidence="3">Cell membrane</location>
        <topology evidence="1">Lipid-anchor</topology>
        <topology evidence="1">GPI-anchor</topology>
    </subcellularLocation>
    <text evidence="3">During host erythrocyte invasion by merozoites, carried into invaded erythrocytes where it is rapidly degraded.</text>
</comment>
<comment type="domain">
    <text evidence="3">The N-terminal region appears to be involved in lipid binding.</text>
</comment>
<comment type="polymorphism">
    <text evidence="6">The sequence varies across Plasmodium strains (PubMed:2000383). All variants share conserved N- and C-terminal regions; however, they belong to two allelic families, represented by 3D7 strain and FC27 strain sequences respectively, distinguished by tandem repeats and dimorphic flanking sequences within the central region of the protein (PubMed:2000383).</text>
</comment>
<feature type="signal peptide" evidence="4">
    <location>
        <begin position="1"/>
        <end position="20"/>
    </location>
</feature>
<feature type="chain" id="PRO_0000024580" description="Merozoite surface protein 2">
    <location>
        <begin position="21"/>
        <end position="321"/>
    </location>
</feature>
<feature type="propeptide" id="PRO_0000024581" description="Removed in mature form" evidence="1">
    <location>
        <begin position="322"/>
        <end position="347"/>
    </location>
</feature>
<feature type="repeat" description="1-1" evidence="6">
    <location>
        <begin position="53"/>
        <end position="60"/>
    </location>
</feature>
<feature type="repeat" description="1-2" evidence="6">
    <location>
        <begin position="61"/>
        <end position="68"/>
    </location>
</feature>
<feature type="repeat" description="1-3" evidence="6">
    <location>
        <begin position="69"/>
        <end position="76"/>
    </location>
</feature>
<feature type="repeat" description="1-4" evidence="6">
    <location>
        <begin position="77"/>
        <end position="84"/>
    </location>
</feature>
<feature type="repeat" description="2-1" evidence="6">
    <location>
        <begin position="85"/>
        <end position="88"/>
    </location>
</feature>
<feature type="repeat" description="2-2" evidence="6">
    <location>
        <begin position="89"/>
        <end position="92"/>
    </location>
</feature>
<feature type="repeat" description="2-3" evidence="6">
    <location>
        <begin position="93"/>
        <end position="96"/>
    </location>
</feature>
<feature type="repeat" description="2-4" evidence="6">
    <location>
        <begin position="97"/>
        <end position="100"/>
    </location>
</feature>
<feature type="repeat" description="2-5" evidence="6">
    <location>
        <begin position="101"/>
        <end position="104"/>
    </location>
</feature>
<feature type="repeat" description="2-6" evidence="6">
    <location>
        <begin position="105"/>
        <end position="108"/>
    </location>
</feature>
<feature type="repeat" description="2-7" evidence="6">
    <location>
        <begin position="109"/>
        <end position="112"/>
    </location>
</feature>
<feature type="repeat" description="2-8" evidence="6">
    <location>
        <begin position="113"/>
        <end position="116"/>
    </location>
</feature>
<feature type="repeat" description="2-9" evidence="6">
    <location>
        <begin position="117"/>
        <end position="120"/>
    </location>
</feature>
<feature type="repeat" description="2-10" evidence="6">
    <location>
        <begin position="121"/>
        <end position="124"/>
    </location>
</feature>
<feature type="repeat" description="2-11" evidence="6">
    <location>
        <begin position="125"/>
        <end position="128"/>
    </location>
</feature>
<feature type="repeat" description="2-12" evidence="6">
    <location>
        <begin position="129"/>
        <end position="132"/>
    </location>
</feature>
<feature type="repeat" description="2-13" evidence="6">
    <location>
        <begin position="133"/>
        <end position="136"/>
    </location>
</feature>
<feature type="repeat" description="2-14" evidence="6">
    <location>
        <begin position="137"/>
        <end position="140"/>
    </location>
</feature>
<feature type="repeat" description="2-15" evidence="6">
    <location>
        <begin position="141"/>
        <end position="144"/>
    </location>
</feature>
<feature type="repeat" description="1-5" evidence="6">
    <location>
        <begin position="145"/>
        <end position="152"/>
    </location>
</feature>
<feature type="repeat" description="2-16" evidence="6">
    <location>
        <begin position="153"/>
        <end position="156"/>
    </location>
</feature>
<feature type="repeat" description="1-6" evidence="6">
    <location>
        <begin position="157"/>
        <end position="164"/>
    </location>
</feature>
<feature type="region of interest" description="Polymorphic region" evidence="6">
    <location>
        <begin position="44"/>
        <end position="273"/>
    </location>
</feature>
<feature type="region of interest" description="6 X 8 AA repeats of G-A-V-A-S-A-G-N" evidence="6">
    <location>
        <begin position="53"/>
        <end position="164"/>
    </location>
</feature>
<feature type="region of interest" description="16 X 4 AA repeats of G-A-G-N" evidence="6">
    <location>
        <begin position="85"/>
        <end position="156"/>
    </location>
</feature>
<feature type="region of interest" description="Disordered" evidence="5">
    <location>
        <begin position="165"/>
        <end position="308"/>
    </location>
</feature>
<feature type="compositionally biased region" description="Low complexity" evidence="5">
    <location>
        <begin position="165"/>
        <end position="206"/>
    </location>
</feature>
<feature type="compositionally biased region" description="Polar residues" evidence="5">
    <location>
        <begin position="213"/>
        <end position="240"/>
    </location>
</feature>
<feature type="compositionally biased region" description="Polar residues" evidence="5">
    <location>
        <begin position="247"/>
        <end position="275"/>
    </location>
</feature>
<feature type="lipid moiety-binding region" description="GPI-anchor amidated asparagine" evidence="1">
    <location>
        <position position="321"/>
    </location>
</feature>
<feature type="glycosylation site" description="N-linked (GlcNAc...) asparagine" evidence="4">
    <location>
        <position position="22"/>
    </location>
</feature>
<feature type="glycosylation site" description="N-linked (GlcNAc...) asparagine" evidence="4">
    <location>
        <position position="36"/>
    </location>
</feature>
<feature type="glycosylation site" description="N-linked (GlcNAc...) asparagine" evidence="4">
    <location>
        <position position="224"/>
    </location>
</feature>
<feature type="glycosylation site" description="N-linked (GlcNAc...) asparagine" evidence="4">
    <location>
        <position position="296"/>
    </location>
</feature>
<feature type="glycosylation site" description="N-linked (GlcNAc...) asparagine" evidence="4">
    <location>
        <position position="320"/>
    </location>
</feature>
<feature type="glycosylation site" description="N-linked (GlcNAc...) asparagine" evidence="4">
    <location>
        <position position="321"/>
    </location>
</feature>
<feature type="disulfide bond" evidence="2">
    <location>
        <begin position="304"/>
        <end position="312"/>
    </location>
</feature>
<sequence>MKVIKTLSIINFFIFVTFNIKNESKYSNTFINNAYNMSIRRSMAESKPPTGDGAVASAGNGAVASAGNGAVASAGNGAVASAGNGAGNGAGNGAGNGAGNGAGNGAGNGAGNGAGNGAGNGAGNGAGNGAGNGAGNGAGNGAGNGAVASAGNGAGNGAVASAGNGAVAERSSSTPATTTTTTTTNDAEASTSTSSENSNHNNAETNPKGNGEVQPNQANKETQNNSNVQQDSQTKSNVPRTQDADTKSPTAQPEQAENSAPTAEQTESPELQSAPENKGTGQHGHMHGSRNNHPQNTSDSQKECTDGNKENCGAATSLLNNSSNIASINKFVVLISATLVLSFAIFI</sequence>
<proteinExistence type="inferred from homology"/>
<protein>
    <recommendedName>
        <fullName evidence="3">Merozoite surface protein 2</fullName>
    </recommendedName>
    <alternativeName>
        <fullName evidence="7">Merozoite surface antigen 2</fullName>
        <shortName evidence="7">MSA-2</shortName>
    </alternativeName>
</protein>
<reference key="1">
    <citation type="journal article" date="1991" name="Proc. Natl. Acad. Sci. U.S.A.">
        <title>Structural diversity in the Plasmodium falciparum merozoite surface antigen 2.</title>
        <authorList>
            <person name="Smythe J.A."/>
            <person name="Coppel R.L."/>
            <person name="Day K.P."/>
            <person name="Martin R.K."/>
            <person name="Oduola A.M.J."/>
            <person name="Kemp D.J."/>
            <person name="Anders R.F."/>
        </authorList>
    </citation>
    <scope>NUCLEOTIDE SEQUENCE [GENOMIC DNA]</scope>
    <scope>POLYMORPHISM</scope>
    <scope>REPEATS</scope>
</reference>
<gene>
    <name evidence="3" type="primary">MSP2</name>
    <name evidence="7" type="synonym">MSA2</name>
</gene>
<organism>
    <name type="scientific">Plasmodium falciparum (isolate Nig32 / Nigeria)</name>
    <dbReference type="NCBI Taxonomy" id="70150"/>
    <lineage>
        <taxon>Eukaryota</taxon>
        <taxon>Sar</taxon>
        <taxon>Alveolata</taxon>
        <taxon>Apicomplexa</taxon>
        <taxon>Aconoidasida</taxon>
        <taxon>Haemosporida</taxon>
        <taxon>Plasmodiidae</taxon>
        <taxon>Plasmodium</taxon>
        <taxon>Plasmodium (Laverania)</taxon>
    </lineage>
</organism>
<name>MSA2_PLAF2</name>